<proteinExistence type="evidence at protein level"/>
<reference evidence="6" key="1">
    <citation type="journal article" date="2002" name="Nature">
        <title>The genome sequence of Schizosaccharomyces pombe.</title>
        <authorList>
            <person name="Wood V."/>
            <person name="Gwilliam R."/>
            <person name="Rajandream M.A."/>
            <person name="Lyne M.H."/>
            <person name="Lyne R."/>
            <person name="Stewart A."/>
            <person name="Sgouros J.G."/>
            <person name="Peat N."/>
            <person name="Hayles J."/>
            <person name="Baker S.G."/>
            <person name="Basham D."/>
            <person name="Bowman S."/>
            <person name="Brooks K."/>
            <person name="Brown D."/>
            <person name="Brown S."/>
            <person name="Chillingworth T."/>
            <person name="Churcher C.M."/>
            <person name="Collins M."/>
            <person name="Connor R."/>
            <person name="Cronin A."/>
            <person name="Davis P."/>
            <person name="Feltwell T."/>
            <person name="Fraser A."/>
            <person name="Gentles S."/>
            <person name="Goble A."/>
            <person name="Hamlin N."/>
            <person name="Harris D.E."/>
            <person name="Hidalgo J."/>
            <person name="Hodgson G."/>
            <person name="Holroyd S."/>
            <person name="Hornsby T."/>
            <person name="Howarth S."/>
            <person name="Huckle E.J."/>
            <person name="Hunt S."/>
            <person name="Jagels K."/>
            <person name="James K.D."/>
            <person name="Jones L."/>
            <person name="Jones M."/>
            <person name="Leather S."/>
            <person name="McDonald S."/>
            <person name="McLean J."/>
            <person name="Mooney P."/>
            <person name="Moule S."/>
            <person name="Mungall K.L."/>
            <person name="Murphy L.D."/>
            <person name="Niblett D."/>
            <person name="Odell C."/>
            <person name="Oliver K."/>
            <person name="O'Neil S."/>
            <person name="Pearson D."/>
            <person name="Quail M.A."/>
            <person name="Rabbinowitsch E."/>
            <person name="Rutherford K.M."/>
            <person name="Rutter S."/>
            <person name="Saunders D."/>
            <person name="Seeger K."/>
            <person name="Sharp S."/>
            <person name="Skelton J."/>
            <person name="Simmonds M.N."/>
            <person name="Squares R."/>
            <person name="Squares S."/>
            <person name="Stevens K."/>
            <person name="Taylor K."/>
            <person name="Taylor R.G."/>
            <person name="Tivey A."/>
            <person name="Walsh S.V."/>
            <person name="Warren T."/>
            <person name="Whitehead S."/>
            <person name="Woodward J.R."/>
            <person name="Volckaert G."/>
            <person name="Aert R."/>
            <person name="Robben J."/>
            <person name="Grymonprez B."/>
            <person name="Weltjens I."/>
            <person name="Vanstreels E."/>
            <person name="Rieger M."/>
            <person name="Schaefer M."/>
            <person name="Mueller-Auer S."/>
            <person name="Gabel C."/>
            <person name="Fuchs M."/>
            <person name="Duesterhoeft A."/>
            <person name="Fritzc C."/>
            <person name="Holzer E."/>
            <person name="Moestl D."/>
            <person name="Hilbert H."/>
            <person name="Borzym K."/>
            <person name="Langer I."/>
            <person name="Beck A."/>
            <person name="Lehrach H."/>
            <person name="Reinhardt R."/>
            <person name="Pohl T.M."/>
            <person name="Eger P."/>
            <person name="Zimmermann W."/>
            <person name="Wedler H."/>
            <person name="Wambutt R."/>
            <person name="Purnelle B."/>
            <person name="Goffeau A."/>
            <person name="Cadieu E."/>
            <person name="Dreano S."/>
            <person name="Gloux S."/>
            <person name="Lelaure V."/>
            <person name="Mottier S."/>
            <person name="Galibert F."/>
            <person name="Aves S.J."/>
            <person name="Xiang Z."/>
            <person name="Hunt C."/>
            <person name="Moore K."/>
            <person name="Hurst S.M."/>
            <person name="Lucas M."/>
            <person name="Rochet M."/>
            <person name="Gaillardin C."/>
            <person name="Tallada V.A."/>
            <person name="Garzon A."/>
            <person name="Thode G."/>
            <person name="Daga R.R."/>
            <person name="Cruzado L."/>
            <person name="Jimenez J."/>
            <person name="Sanchez M."/>
            <person name="del Rey F."/>
            <person name="Benito J."/>
            <person name="Dominguez A."/>
            <person name="Revuelta J.L."/>
            <person name="Moreno S."/>
            <person name="Armstrong J."/>
            <person name="Forsburg S.L."/>
            <person name="Cerutti L."/>
            <person name="Lowe T."/>
            <person name="McCombie W.R."/>
            <person name="Paulsen I."/>
            <person name="Potashkin J."/>
            <person name="Shpakovski G.V."/>
            <person name="Ussery D."/>
            <person name="Barrell B.G."/>
            <person name="Nurse P."/>
        </authorList>
    </citation>
    <scope>NUCLEOTIDE SEQUENCE [LARGE SCALE GENOMIC DNA]</scope>
    <source>
        <strain>972 / ATCC 24843</strain>
    </source>
</reference>
<reference evidence="5" key="2">
    <citation type="journal article" date="2006" name="Nat. Biotechnol.">
        <title>ORFeome cloning and global analysis of protein localization in the fission yeast Schizosaccharomyces pombe.</title>
        <authorList>
            <person name="Matsuyama A."/>
            <person name="Arai R."/>
            <person name="Yashiroda Y."/>
            <person name="Shirai A."/>
            <person name="Kamata A."/>
            <person name="Sekido S."/>
            <person name="Kobayashi Y."/>
            <person name="Hashimoto A."/>
            <person name="Hamamoto M."/>
            <person name="Hiraoka Y."/>
            <person name="Horinouchi S."/>
            <person name="Yoshida M."/>
        </authorList>
    </citation>
    <scope>SUBCELLULAR LOCATION [LARGE SCALE ANALYSIS]</scope>
</reference>
<feature type="initiator methionine" description="Removed" evidence="2">
    <location>
        <position position="1"/>
    </location>
</feature>
<feature type="chain" id="PRO_0000309451" description="Aspartate aminotransferase, cytoplasmic" evidence="2">
    <location>
        <begin position="2"/>
        <end position="409"/>
    </location>
</feature>
<feature type="binding site" evidence="1">
    <location>
        <position position="38"/>
    </location>
    <ligand>
        <name>L-aspartate</name>
        <dbReference type="ChEBI" id="CHEBI:29991"/>
    </ligand>
</feature>
<feature type="binding site" evidence="1">
    <location>
        <position position="138"/>
    </location>
    <ligand>
        <name>L-aspartate</name>
        <dbReference type="ChEBI" id="CHEBI:29991"/>
    </ligand>
</feature>
<feature type="binding site" evidence="1">
    <location>
        <position position="191"/>
    </location>
    <ligand>
        <name>L-aspartate</name>
        <dbReference type="ChEBI" id="CHEBI:29991"/>
    </ligand>
</feature>
<feature type="binding site" evidence="1">
    <location>
        <position position="383"/>
    </location>
    <ligand>
        <name>L-aspartate</name>
        <dbReference type="ChEBI" id="CHEBI:29991"/>
    </ligand>
</feature>
<feature type="modified residue" description="N-acetylserine" evidence="2">
    <location>
        <position position="2"/>
    </location>
</feature>
<feature type="modified residue" description="N6-(pyridoxal phosphate)lysine" evidence="1">
    <location>
        <position position="255"/>
    </location>
</feature>
<feature type="modified residue" description="Phosphoserine" evidence="2">
    <location>
        <position position="385"/>
    </location>
</feature>
<feature type="helix" evidence="7">
    <location>
        <begin position="6"/>
        <end position="8"/>
    </location>
</feature>
<feature type="helix" evidence="7">
    <location>
        <begin position="16"/>
        <end position="26"/>
    </location>
</feature>
<feature type="helix" evidence="7">
    <location>
        <begin position="51"/>
        <end position="62"/>
    </location>
</feature>
<feature type="helix" evidence="7">
    <location>
        <begin position="77"/>
        <end position="87"/>
    </location>
</feature>
<feature type="turn" evidence="7">
    <location>
        <begin position="88"/>
        <end position="90"/>
    </location>
</feature>
<feature type="helix" evidence="7">
    <location>
        <begin position="93"/>
        <end position="96"/>
    </location>
</feature>
<feature type="strand" evidence="7">
    <location>
        <begin position="100"/>
        <end position="106"/>
    </location>
</feature>
<feature type="helix" evidence="7">
    <location>
        <begin position="107"/>
        <end position="122"/>
    </location>
</feature>
<feature type="helix" evidence="7">
    <location>
        <begin position="124"/>
        <end position="127"/>
    </location>
</feature>
<feature type="strand" evidence="7">
    <location>
        <begin position="131"/>
        <end position="136"/>
    </location>
</feature>
<feature type="helix" evidence="7">
    <location>
        <begin position="140"/>
        <end position="147"/>
    </location>
</feature>
<feature type="strand" evidence="7">
    <location>
        <begin position="152"/>
        <end position="156"/>
    </location>
</feature>
<feature type="turn" evidence="7">
    <location>
        <begin position="160"/>
        <end position="163"/>
    </location>
</feature>
<feature type="helix" evidence="7">
    <location>
        <begin position="167"/>
        <end position="176"/>
    </location>
</feature>
<feature type="strand" evidence="7">
    <location>
        <begin position="182"/>
        <end position="186"/>
    </location>
</feature>
<feature type="turn" evidence="7">
    <location>
        <begin position="191"/>
        <end position="193"/>
    </location>
</feature>
<feature type="helix" evidence="7">
    <location>
        <begin position="199"/>
        <end position="211"/>
    </location>
</feature>
<feature type="strand" evidence="7">
    <location>
        <begin position="215"/>
        <end position="221"/>
    </location>
</feature>
<feature type="turn" evidence="7">
    <location>
        <begin position="223"/>
        <end position="227"/>
    </location>
</feature>
<feature type="helix" evidence="7">
    <location>
        <begin position="230"/>
        <end position="233"/>
    </location>
</feature>
<feature type="helix" evidence="7">
    <location>
        <begin position="235"/>
        <end position="241"/>
    </location>
</feature>
<feature type="strand" evidence="7">
    <location>
        <begin position="247"/>
        <end position="252"/>
    </location>
</feature>
<feature type="turn" evidence="7">
    <location>
        <begin position="254"/>
        <end position="256"/>
    </location>
</feature>
<feature type="helix" evidence="7">
    <location>
        <begin position="260"/>
        <end position="262"/>
    </location>
</feature>
<feature type="strand" evidence="7">
    <location>
        <begin position="264"/>
        <end position="270"/>
    </location>
</feature>
<feature type="helix" evidence="7">
    <location>
        <begin position="274"/>
        <end position="289"/>
    </location>
</feature>
<feature type="turn" evidence="7">
    <location>
        <begin position="290"/>
        <end position="292"/>
    </location>
</feature>
<feature type="helix" evidence="7">
    <location>
        <begin position="297"/>
        <end position="308"/>
    </location>
</feature>
<feature type="helix" evidence="7">
    <location>
        <begin position="310"/>
        <end position="340"/>
    </location>
</feature>
<feature type="helix" evidence="7">
    <location>
        <begin position="349"/>
        <end position="352"/>
    </location>
</feature>
<feature type="strand" evidence="7">
    <location>
        <begin position="355"/>
        <end position="359"/>
    </location>
</feature>
<feature type="helix" evidence="7">
    <location>
        <begin position="364"/>
        <end position="374"/>
    </location>
</feature>
<feature type="strand" evidence="7">
    <location>
        <begin position="383"/>
        <end position="385"/>
    </location>
</feature>
<feature type="helix" evidence="7">
    <location>
        <begin position="386"/>
        <end position="388"/>
    </location>
</feature>
<feature type="turn" evidence="7">
    <location>
        <begin position="391"/>
        <end position="393"/>
    </location>
</feature>
<feature type="helix" evidence="7">
    <location>
        <begin position="394"/>
        <end position="407"/>
    </location>
</feature>
<accession>O42652</accession>
<evidence type="ECO:0000250" key="1"/>
<evidence type="ECO:0000250" key="2">
    <source>
        <dbReference type="UniProtKB" id="P23542"/>
    </source>
</evidence>
<evidence type="ECO:0000255" key="3"/>
<evidence type="ECO:0000269" key="4">
    <source>
    </source>
</evidence>
<evidence type="ECO:0000305" key="5"/>
<evidence type="ECO:0000312" key="6">
    <source>
        <dbReference type="EMBL" id="CAA15726.1"/>
    </source>
</evidence>
<evidence type="ECO:0007829" key="7">
    <source>
        <dbReference type="PDB" id="6JPK"/>
    </source>
</evidence>
<keyword id="KW-0002">3D-structure</keyword>
<keyword id="KW-0007">Acetylation</keyword>
<keyword id="KW-0032">Aminotransferase</keyword>
<keyword id="KW-0963">Cytoplasm</keyword>
<keyword id="KW-0597">Phosphoprotein</keyword>
<keyword id="KW-0663">Pyridoxal phosphate</keyword>
<keyword id="KW-1185">Reference proteome</keyword>
<keyword id="KW-0808">Transferase</keyword>
<dbReference type="EC" id="2.6.1.1"/>
<dbReference type="EMBL" id="CU329670">
    <property type="protein sequence ID" value="CAA15726.1"/>
    <property type="molecule type" value="Genomic_DNA"/>
</dbReference>
<dbReference type="PIR" id="T37507">
    <property type="entry name" value="T37507"/>
</dbReference>
<dbReference type="RefSeq" id="NP_593264.1">
    <property type="nucleotide sequence ID" value="NM_001018661.2"/>
</dbReference>
<dbReference type="PDB" id="6JPK">
    <property type="method" value="X-ray"/>
    <property type="resolution" value="2.10 A"/>
    <property type="chains" value="A/B=1-409"/>
</dbReference>
<dbReference type="PDBsum" id="6JPK"/>
<dbReference type="SMR" id="O42652"/>
<dbReference type="BioGRID" id="279456">
    <property type="interactions" value="62"/>
</dbReference>
<dbReference type="FunCoup" id="O42652">
    <property type="interactions" value="539"/>
</dbReference>
<dbReference type="STRING" id="284812.O42652"/>
<dbReference type="iPTMnet" id="O42652"/>
<dbReference type="PaxDb" id="4896-SPAC10F6.13c.1"/>
<dbReference type="EnsemblFungi" id="SPAC10F6.13c.1">
    <property type="protein sequence ID" value="SPAC10F6.13c.1:pep"/>
    <property type="gene ID" value="SPAC10F6.13c"/>
</dbReference>
<dbReference type="GeneID" id="2543020"/>
<dbReference type="KEGG" id="spo:2543020"/>
<dbReference type="PomBase" id="SPAC10F6.13c"/>
<dbReference type="VEuPathDB" id="FungiDB:SPAC10F6.13c"/>
<dbReference type="eggNOG" id="KOG1412">
    <property type="taxonomic scope" value="Eukaryota"/>
</dbReference>
<dbReference type="HOGENOM" id="CLU_032440_1_2_1"/>
<dbReference type="InParanoid" id="O42652"/>
<dbReference type="OMA" id="GTWTHIT"/>
<dbReference type="PhylomeDB" id="O42652"/>
<dbReference type="BRENDA" id="2.6.1.1">
    <property type="organism ID" value="5613"/>
</dbReference>
<dbReference type="Reactome" id="R-SPO-8963693">
    <property type="pathway name" value="Aspartate and asparagine metabolism"/>
</dbReference>
<dbReference type="Reactome" id="R-SPO-9856872">
    <property type="pathway name" value="Malate-aspartate shuttle"/>
</dbReference>
<dbReference type="PRO" id="PR:O42652"/>
<dbReference type="Proteomes" id="UP000002485">
    <property type="component" value="Chromosome I"/>
</dbReference>
<dbReference type="GO" id="GO:0005829">
    <property type="term" value="C:cytosol"/>
    <property type="evidence" value="ECO:0007005"/>
    <property type="project" value="PomBase"/>
</dbReference>
<dbReference type="GO" id="GO:0005634">
    <property type="term" value="C:nucleus"/>
    <property type="evidence" value="ECO:0007005"/>
    <property type="project" value="PomBase"/>
</dbReference>
<dbReference type="GO" id="GO:0004069">
    <property type="term" value="F:L-aspartate:2-oxoglutarate aminotransferase activity"/>
    <property type="evidence" value="ECO:0000250"/>
    <property type="project" value="UniProtKB"/>
</dbReference>
<dbReference type="GO" id="GO:0030170">
    <property type="term" value="F:pyridoxal phosphate binding"/>
    <property type="evidence" value="ECO:0007669"/>
    <property type="project" value="InterPro"/>
</dbReference>
<dbReference type="GO" id="GO:0006103">
    <property type="term" value="P:2-oxoglutarate metabolic process"/>
    <property type="evidence" value="ECO:0000250"/>
    <property type="project" value="UniProtKB"/>
</dbReference>
<dbReference type="GO" id="GO:0006532">
    <property type="term" value="P:aspartate biosynthetic process"/>
    <property type="evidence" value="ECO:0000318"/>
    <property type="project" value="GO_Central"/>
</dbReference>
<dbReference type="GO" id="GO:0006531">
    <property type="term" value="P:aspartate metabolic process"/>
    <property type="evidence" value="ECO:0000250"/>
    <property type="project" value="UniProtKB"/>
</dbReference>
<dbReference type="GO" id="GO:0006536">
    <property type="term" value="P:glutamate metabolic process"/>
    <property type="evidence" value="ECO:0000250"/>
    <property type="project" value="UniProtKB"/>
</dbReference>
<dbReference type="CDD" id="cd00609">
    <property type="entry name" value="AAT_like"/>
    <property type="match status" value="1"/>
</dbReference>
<dbReference type="FunFam" id="3.40.640.10:FF:000066">
    <property type="entry name" value="Aspartate aminotransferase"/>
    <property type="match status" value="1"/>
</dbReference>
<dbReference type="FunFam" id="3.90.1150.10:FF:000001">
    <property type="entry name" value="Aspartate aminotransferase"/>
    <property type="match status" value="1"/>
</dbReference>
<dbReference type="Gene3D" id="3.90.1150.10">
    <property type="entry name" value="Aspartate Aminotransferase, domain 1"/>
    <property type="match status" value="1"/>
</dbReference>
<dbReference type="Gene3D" id="3.40.640.10">
    <property type="entry name" value="Type I PLP-dependent aspartate aminotransferase-like (Major domain)"/>
    <property type="match status" value="1"/>
</dbReference>
<dbReference type="InterPro" id="IPR004839">
    <property type="entry name" value="Aminotransferase_I/II_large"/>
</dbReference>
<dbReference type="InterPro" id="IPR000796">
    <property type="entry name" value="Asp_trans"/>
</dbReference>
<dbReference type="InterPro" id="IPR015424">
    <property type="entry name" value="PyrdxlP-dep_Trfase"/>
</dbReference>
<dbReference type="InterPro" id="IPR015421">
    <property type="entry name" value="PyrdxlP-dep_Trfase_major"/>
</dbReference>
<dbReference type="InterPro" id="IPR015422">
    <property type="entry name" value="PyrdxlP-dep_Trfase_small"/>
</dbReference>
<dbReference type="NCBIfam" id="NF006719">
    <property type="entry name" value="PRK09257.1"/>
    <property type="match status" value="1"/>
</dbReference>
<dbReference type="PANTHER" id="PTHR11879">
    <property type="entry name" value="ASPARTATE AMINOTRANSFERASE"/>
    <property type="match status" value="1"/>
</dbReference>
<dbReference type="PANTHER" id="PTHR11879:SF55">
    <property type="entry name" value="GLUTAMATE OXALOACETATE TRANSAMINASE 1, ISOFORM B"/>
    <property type="match status" value="1"/>
</dbReference>
<dbReference type="Pfam" id="PF00155">
    <property type="entry name" value="Aminotran_1_2"/>
    <property type="match status" value="1"/>
</dbReference>
<dbReference type="PRINTS" id="PR00799">
    <property type="entry name" value="TRANSAMINASE"/>
</dbReference>
<dbReference type="SUPFAM" id="SSF53383">
    <property type="entry name" value="PLP-dependent transferases"/>
    <property type="match status" value="1"/>
</dbReference>
<gene>
    <name evidence="2" type="primary">aat2</name>
    <name type="ORF">SPAC10F6.13c</name>
</gene>
<protein>
    <recommendedName>
        <fullName>Aspartate aminotransferase, cytoplasmic</fullName>
        <ecNumber>2.6.1.1</ecNumber>
    </recommendedName>
    <alternativeName>
        <fullName>Transaminase A</fullName>
    </alternativeName>
</protein>
<name>AATC_SCHPO</name>
<organism>
    <name type="scientific">Schizosaccharomyces pombe (strain 972 / ATCC 24843)</name>
    <name type="common">Fission yeast</name>
    <dbReference type="NCBI Taxonomy" id="284812"/>
    <lineage>
        <taxon>Eukaryota</taxon>
        <taxon>Fungi</taxon>
        <taxon>Dikarya</taxon>
        <taxon>Ascomycota</taxon>
        <taxon>Taphrinomycotina</taxon>
        <taxon>Schizosaccharomycetes</taxon>
        <taxon>Schizosaccharomycetales</taxon>
        <taxon>Schizosaccharomycetaceae</taxon>
        <taxon>Schizosaccharomyces</taxon>
    </lineage>
</organism>
<comment type="function">
    <text evidence="1">Plays a key role in amino acid metabolism.</text>
</comment>
<comment type="catalytic activity">
    <reaction evidence="2">
        <text>L-aspartate + 2-oxoglutarate = oxaloacetate + L-glutamate</text>
        <dbReference type="Rhea" id="RHEA:21824"/>
        <dbReference type="ChEBI" id="CHEBI:16452"/>
        <dbReference type="ChEBI" id="CHEBI:16810"/>
        <dbReference type="ChEBI" id="CHEBI:29985"/>
        <dbReference type="ChEBI" id="CHEBI:29991"/>
        <dbReference type="EC" id="2.6.1.1"/>
    </reaction>
</comment>
<comment type="cofactor">
    <cofactor evidence="2">
        <name>pyridoxal 5'-phosphate</name>
        <dbReference type="ChEBI" id="CHEBI:597326"/>
    </cofactor>
</comment>
<comment type="subunit">
    <text evidence="2">Homodimer.</text>
</comment>
<comment type="subcellular location">
    <subcellularLocation>
        <location evidence="4">Cytoplasm</location>
    </subcellularLocation>
</comment>
<comment type="miscellaneous">
    <text evidence="5">In eukaryotes there are cytoplasmic, mitochondrial and chloroplastic isozymes.</text>
</comment>
<comment type="similarity">
    <text evidence="3">Belongs to the class-I pyridoxal-phosphate-dependent aminotransferase family.</text>
</comment>
<sequence>MSDYGFANIEEAKADAIFKLNAQYHQDEDPKKVNMSVGAYRDDTGKPWILPAVKKASKIVEEQASFNHEYLPIAGLPRFTKAAAEVLFRPNPHLLSEDRVASMQSVSGTGANFLAASFIETFYVKHTGAHVYISNPTWPVHRTLWEKLGVTVDTYPYWDAKNRSFDYEGMLSTIKSAPEGSIFLLHACAHNPTGIDPTREQWLSIFESLLSRKHLVVFDIAYQGFASGDLNRDSWALNEFVKYNKDFFVCQSFAKNMGLYGERTGCMHYVAKDASTKNKVLSQLCIVQRNTISNPPAYGARIAAEILNSPQLFAEWEQDLKTMSSRIIEMRKRLRDSLVALKTPGSWDHITQQIGMFSFTGLTPAQVQFCQERYHLYFSANGRISMAGLNNSNVEHVAQAFNHAVRELP</sequence>